<organism>
    <name type="scientific">Saccharophagus degradans (strain 2-40 / ATCC 43961 / DSM 17024)</name>
    <dbReference type="NCBI Taxonomy" id="203122"/>
    <lineage>
        <taxon>Bacteria</taxon>
        <taxon>Pseudomonadati</taxon>
        <taxon>Pseudomonadota</taxon>
        <taxon>Gammaproteobacteria</taxon>
        <taxon>Cellvibrionales</taxon>
        <taxon>Cellvibrionaceae</taxon>
        <taxon>Saccharophagus</taxon>
    </lineage>
</organism>
<sequence length="500" mass="52731">MEFIAKKADIATLSTQCVVVFCKDGKLMASASHLDTEQHGLLTHQLSIKAISPTAGSHLWLTLAPTKSAKHSKALLVQLGESKKKSADITIEDIRKISQKLASTLNSAKLKDAAVFFDSALPASGDCTLEKLAHTLALEIERASYRFSLKAGTKNTPATLKKVVFVATNSAETKTLRNGANTGSAMGKGINAARELGNLPGNICTPNYLAEQAKQLAAGCKKLTSKALGEKQMERLGMGAFLSVSKGSDQEGKLILLEYKGAAANKAPHVLVGKGVTFDTGGISLKPGANMDEMKFDMCGAASVLGTFKALVELDAKVNVVGIIAAAENMPSGGASKPGDVVTSMSGQTIEILNTDAEGRLVLCDALTYAERYKPKSVVDIATLTGACVVALGNHAAGLYSNTQSVADALLKAGEETHDRAWQMPLWDDYQRQLDSNFADMGNIGGMPGGSITAACFLSRYTKKYPWAHLDIAGVAWHSGAKKGATGRPVSLLVNYLLNN</sequence>
<proteinExistence type="inferred from homology"/>
<gene>
    <name evidence="1" type="primary">pepA</name>
    <name type="ordered locus">Sde_1372</name>
</gene>
<evidence type="ECO:0000255" key="1">
    <source>
        <dbReference type="HAMAP-Rule" id="MF_00181"/>
    </source>
</evidence>
<comment type="function">
    <text evidence="1">Presumably involved in the processing and regular turnover of intracellular proteins. Catalyzes the removal of unsubstituted N-terminal amino acids from various peptides.</text>
</comment>
<comment type="catalytic activity">
    <reaction evidence="1">
        <text>Release of an N-terminal amino acid, Xaa-|-Yaa-, in which Xaa is preferably Leu, but may be other amino acids including Pro although not Arg or Lys, and Yaa may be Pro. Amino acid amides and methyl esters are also readily hydrolyzed, but rates on arylamides are exceedingly low.</text>
        <dbReference type="EC" id="3.4.11.1"/>
    </reaction>
</comment>
<comment type="catalytic activity">
    <reaction evidence="1">
        <text>Release of an N-terminal amino acid, preferentially leucine, but not glutamic or aspartic acids.</text>
        <dbReference type="EC" id="3.4.11.10"/>
    </reaction>
</comment>
<comment type="cofactor">
    <cofactor evidence="1">
        <name>Mn(2+)</name>
        <dbReference type="ChEBI" id="CHEBI:29035"/>
    </cofactor>
    <text evidence="1">Binds 2 manganese ions per subunit.</text>
</comment>
<comment type="subcellular location">
    <subcellularLocation>
        <location evidence="1">Cytoplasm</location>
    </subcellularLocation>
</comment>
<comment type="similarity">
    <text evidence="1">Belongs to the peptidase M17 family.</text>
</comment>
<feature type="chain" id="PRO_1000071654" description="Probable cytosol aminopeptidase">
    <location>
        <begin position="1"/>
        <end position="500"/>
    </location>
</feature>
<feature type="active site" evidence="1">
    <location>
        <position position="286"/>
    </location>
</feature>
<feature type="active site" evidence="1">
    <location>
        <position position="360"/>
    </location>
</feature>
<feature type="binding site" evidence="1">
    <location>
        <position position="274"/>
    </location>
    <ligand>
        <name>Mn(2+)</name>
        <dbReference type="ChEBI" id="CHEBI:29035"/>
        <label>2</label>
    </ligand>
</feature>
<feature type="binding site" evidence="1">
    <location>
        <position position="279"/>
    </location>
    <ligand>
        <name>Mn(2+)</name>
        <dbReference type="ChEBI" id="CHEBI:29035"/>
        <label>1</label>
    </ligand>
</feature>
<feature type="binding site" evidence="1">
    <location>
        <position position="279"/>
    </location>
    <ligand>
        <name>Mn(2+)</name>
        <dbReference type="ChEBI" id="CHEBI:29035"/>
        <label>2</label>
    </ligand>
</feature>
<feature type="binding site" evidence="1">
    <location>
        <position position="297"/>
    </location>
    <ligand>
        <name>Mn(2+)</name>
        <dbReference type="ChEBI" id="CHEBI:29035"/>
        <label>2</label>
    </ligand>
</feature>
<feature type="binding site" evidence="1">
    <location>
        <position position="356"/>
    </location>
    <ligand>
        <name>Mn(2+)</name>
        <dbReference type="ChEBI" id="CHEBI:29035"/>
        <label>1</label>
    </ligand>
</feature>
<feature type="binding site" evidence="1">
    <location>
        <position position="358"/>
    </location>
    <ligand>
        <name>Mn(2+)</name>
        <dbReference type="ChEBI" id="CHEBI:29035"/>
        <label>1</label>
    </ligand>
</feature>
<feature type="binding site" evidence="1">
    <location>
        <position position="358"/>
    </location>
    <ligand>
        <name>Mn(2+)</name>
        <dbReference type="ChEBI" id="CHEBI:29035"/>
        <label>2</label>
    </ligand>
</feature>
<reference key="1">
    <citation type="journal article" date="2008" name="PLoS Genet.">
        <title>Complete genome sequence of the complex carbohydrate-degrading marine bacterium, Saccharophagus degradans strain 2-40 T.</title>
        <authorList>
            <person name="Weiner R.M."/>
            <person name="Taylor L.E. II"/>
            <person name="Henrissat B."/>
            <person name="Hauser L."/>
            <person name="Land M."/>
            <person name="Coutinho P.M."/>
            <person name="Rancurel C."/>
            <person name="Saunders E.H."/>
            <person name="Longmire A.G."/>
            <person name="Zhang H."/>
            <person name="Bayer E.A."/>
            <person name="Gilbert H.J."/>
            <person name="Larimer F."/>
            <person name="Zhulin I.B."/>
            <person name="Ekborg N.A."/>
            <person name="Lamed R."/>
            <person name="Richardson P.M."/>
            <person name="Borovok I."/>
            <person name="Hutcheson S."/>
        </authorList>
    </citation>
    <scope>NUCLEOTIDE SEQUENCE [LARGE SCALE GENOMIC DNA]</scope>
    <source>
        <strain>2-40 / ATCC 43961 / DSM 17024</strain>
    </source>
</reference>
<accession>Q21KZ5</accession>
<protein>
    <recommendedName>
        <fullName evidence="1">Probable cytosol aminopeptidase</fullName>
        <ecNumber evidence="1">3.4.11.1</ecNumber>
    </recommendedName>
    <alternativeName>
        <fullName evidence="1">Leucine aminopeptidase</fullName>
        <shortName evidence="1">LAP</shortName>
        <ecNumber evidence="1">3.4.11.10</ecNumber>
    </alternativeName>
    <alternativeName>
        <fullName evidence="1">Leucyl aminopeptidase</fullName>
    </alternativeName>
</protein>
<keyword id="KW-0031">Aminopeptidase</keyword>
<keyword id="KW-0963">Cytoplasm</keyword>
<keyword id="KW-0378">Hydrolase</keyword>
<keyword id="KW-0464">Manganese</keyword>
<keyword id="KW-0479">Metal-binding</keyword>
<keyword id="KW-0645">Protease</keyword>
<keyword id="KW-1185">Reference proteome</keyword>
<dbReference type="EC" id="3.4.11.1" evidence="1"/>
<dbReference type="EC" id="3.4.11.10" evidence="1"/>
<dbReference type="EMBL" id="CP000282">
    <property type="protein sequence ID" value="ABD80634.1"/>
    <property type="molecule type" value="Genomic_DNA"/>
</dbReference>
<dbReference type="RefSeq" id="WP_011467854.1">
    <property type="nucleotide sequence ID" value="NC_007912.1"/>
</dbReference>
<dbReference type="SMR" id="Q21KZ5"/>
<dbReference type="STRING" id="203122.Sde_1372"/>
<dbReference type="MEROPS" id="M17.003"/>
<dbReference type="GeneID" id="98613047"/>
<dbReference type="KEGG" id="sde:Sde_1372"/>
<dbReference type="eggNOG" id="COG0260">
    <property type="taxonomic scope" value="Bacteria"/>
</dbReference>
<dbReference type="HOGENOM" id="CLU_013734_2_2_6"/>
<dbReference type="OrthoDB" id="9809354at2"/>
<dbReference type="Proteomes" id="UP000001947">
    <property type="component" value="Chromosome"/>
</dbReference>
<dbReference type="GO" id="GO:0005737">
    <property type="term" value="C:cytoplasm"/>
    <property type="evidence" value="ECO:0007669"/>
    <property type="project" value="UniProtKB-SubCell"/>
</dbReference>
<dbReference type="GO" id="GO:0030145">
    <property type="term" value="F:manganese ion binding"/>
    <property type="evidence" value="ECO:0007669"/>
    <property type="project" value="UniProtKB-UniRule"/>
</dbReference>
<dbReference type="GO" id="GO:0070006">
    <property type="term" value="F:metalloaminopeptidase activity"/>
    <property type="evidence" value="ECO:0007669"/>
    <property type="project" value="InterPro"/>
</dbReference>
<dbReference type="GO" id="GO:0006508">
    <property type="term" value="P:proteolysis"/>
    <property type="evidence" value="ECO:0007669"/>
    <property type="project" value="UniProtKB-KW"/>
</dbReference>
<dbReference type="CDD" id="cd00433">
    <property type="entry name" value="Peptidase_M17"/>
    <property type="match status" value="1"/>
</dbReference>
<dbReference type="FunFam" id="3.40.630.10:FF:000004">
    <property type="entry name" value="Probable cytosol aminopeptidase"/>
    <property type="match status" value="1"/>
</dbReference>
<dbReference type="Gene3D" id="3.40.220.10">
    <property type="entry name" value="Leucine Aminopeptidase, subunit E, domain 1"/>
    <property type="match status" value="1"/>
</dbReference>
<dbReference type="Gene3D" id="3.40.630.10">
    <property type="entry name" value="Zn peptidases"/>
    <property type="match status" value="1"/>
</dbReference>
<dbReference type="HAMAP" id="MF_00181">
    <property type="entry name" value="Cytosol_peptidase_M17"/>
    <property type="match status" value="1"/>
</dbReference>
<dbReference type="InterPro" id="IPR011356">
    <property type="entry name" value="Leucine_aapep/pepB"/>
</dbReference>
<dbReference type="InterPro" id="IPR043472">
    <property type="entry name" value="Macro_dom-like"/>
</dbReference>
<dbReference type="InterPro" id="IPR000819">
    <property type="entry name" value="Peptidase_M17_C"/>
</dbReference>
<dbReference type="InterPro" id="IPR023042">
    <property type="entry name" value="Peptidase_M17_leu_NH2_pept"/>
</dbReference>
<dbReference type="InterPro" id="IPR008283">
    <property type="entry name" value="Peptidase_M17_N"/>
</dbReference>
<dbReference type="NCBIfam" id="NF002074">
    <property type="entry name" value="PRK00913.1-4"/>
    <property type="match status" value="1"/>
</dbReference>
<dbReference type="PANTHER" id="PTHR11963:SF23">
    <property type="entry name" value="CYTOSOL AMINOPEPTIDASE"/>
    <property type="match status" value="1"/>
</dbReference>
<dbReference type="PANTHER" id="PTHR11963">
    <property type="entry name" value="LEUCINE AMINOPEPTIDASE-RELATED"/>
    <property type="match status" value="1"/>
</dbReference>
<dbReference type="Pfam" id="PF00883">
    <property type="entry name" value="Peptidase_M17"/>
    <property type="match status" value="1"/>
</dbReference>
<dbReference type="Pfam" id="PF02789">
    <property type="entry name" value="Peptidase_M17_N"/>
    <property type="match status" value="1"/>
</dbReference>
<dbReference type="PRINTS" id="PR00481">
    <property type="entry name" value="LAMNOPPTDASE"/>
</dbReference>
<dbReference type="SUPFAM" id="SSF52949">
    <property type="entry name" value="Macro domain-like"/>
    <property type="match status" value="1"/>
</dbReference>
<dbReference type="SUPFAM" id="SSF53187">
    <property type="entry name" value="Zn-dependent exopeptidases"/>
    <property type="match status" value="1"/>
</dbReference>
<dbReference type="PROSITE" id="PS00631">
    <property type="entry name" value="CYTOSOL_AP"/>
    <property type="match status" value="1"/>
</dbReference>
<name>AMPA_SACD2</name>